<evidence type="ECO:0000255" key="1">
    <source>
        <dbReference type="HAMAP-Rule" id="MF_00108"/>
    </source>
</evidence>
<dbReference type="EC" id="2.7.7.60" evidence="1"/>
<dbReference type="EMBL" id="CP001103">
    <property type="protein sequence ID" value="AEA96825.1"/>
    <property type="molecule type" value="Genomic_DNA"/>
</dbReference>
<dbReference type="EMBL" id="CP001103">
    <property type="protein sequence ID" value="AEA99857.1"/>
    <property type="molecule type" value="Genomic_DNA"/>
</dbReference>
<dbReference type="RefSeq" id="WP_012517179.1">
    <property type="nucleotide sequence ID" value="NC_011138.3"/>
</dbReference>
<dbReference type="SMR" id="B4RZG5"/>
<dbReference type="KEGG" id="amc:MADE_1003385"/>
<dbReference type="HOGENOM" id="CLU_061281_3_1_6"/>
<dbReference type="UniPathway" id="UPA00056">
    <property type="reaction ID" value="UER00093"/>
</dbReference>
<dbReference type="Proteomes" id="UP000001870">
    <property type="component" value="Chromosome"/>
</dbReference>
<dbReference type="GO" id="GO:0050518">
    <property type="term" value="F:2-C-methyl-D-erythritol 4-phosphate cytidylyltransferase activity"/>
    <property type="evidence" value="ECO:0007669"/>
    <property type="project" value="UniProtKB-UniRule"/>
</dbReference>
<dbReference type="GO" id="GO:0019288">
    <property type="term" value="P:isopentenyl diphosphate biosynthetic process, methylerythritol 4-phosphate pathway"/>
    <property type="evidence" value="ECO:0007669"/>
    <property type="project" value="UniProtKB-UniRule"/>
</dbReference>
<dbReference type="CDD" id="cd02516">
    <property type="entry name" value="CDP-ME_synthetase"/>
    <property type="match status" value="1"/>
</dbReference>
<dbReference type="FunFam" id="3.90.550.10:FF:000003">
    <property type="entry name" value="2-C-methyl-D-erythritol 4-phosphate cytidylyltransferase"/>
    <property type="match status" value="1"/>
</dbReference>
<dbReference type="Gene3D" id="3.90.550.10">
    <property type="entry name" value="Spore Coat Polysaccharide Biosynthesis Protein SpsA, Chain A"/>
    <property type="match status" value="1"/>
</dbReference>
<dbReference type="HAMAP" id="MF_00108">
    <property type="entry name" value="IspD"/>
    <property type="match status" value="1"/>
</dbReference>
<dbReference type="InterPro" id="IPR001228">
    <property type="entry name" value="IspD"/>
</dbReference>
<dbReference type="InterPro" id="IPR034683">
    <property type="entry name" value="IspD/TarI"/>
</dbReference>
<dbReference type="InterPro" id="IPR050088">
    <property type="entry name" value="IspD/TarI_cytidylyltransf_bact"/>
</dbReference>
<dbReference type="InterPro" id="IPR029044">
    <property type="entry name" value="Nucleotide-diphossugar_trans"/>
</dbReference>
<dbReference type="NCBIfam" id="TIGR00453">
    <property type="entry name" value="ispD"/>
    <property type="match status" value="1"/>
</dbReference>
<dbReference type="PANTHER" id="PTHR32125">
    <property type="entry name" value="2-C-METHYL-D-ERYTHRITOL 4-PHOSPHATE CYTIDYLYLTRANSFERASE, CHLOROPLASTIC"/>
    <property type="match status" value="1"/>
</dbReference>
<dbReference type="PANTHER" id="PTHR32125:SF4">
    <property type="entry name" value="2-C-METHYL-D-ERYTHRITOL 4-PHOSPHATE CYTIDYLYLTRANSFERASE, CHLOROPLASTIC"/>
    <property type="match status" value="1"/>
</dbReference>
<dbReference type="Pfam" id="PF01128">
    <property type="entry name" value="IspD"/>
    <property type="match status" value="1"/>
</dbReference>
<dbReference type="SUPFAM" id="SSF53448">
    <property type="entry name" value="Nucleotide-diphospho-sugar transferases"/>
    <property type="match status" value="1"/>
</dbReference>
<proteinExistence type="inferred from homology"/>
<protein>
    <recommendedName>
        <fullName evidence="1">2-C-methyl-D-erythritol 4-phosphate cytidylyltransferase</fullName>
        <ecNumber evidence="1">2.7.7.60</ecNumber>
    </recommendedName>
    <alternativeName>
        <fullName evidence="1">4-diphosphocytidyl-2C-methyl-D-erythritol synthase</fullName>
    </alternativeName>
    <alternativeName>
        <fullName evidence="1">MEP cytidylyltransferase</fullName>
        <shortName evidence="1">MCT</shortName>
    </alternativeName>
</protein>
<name>ISPD_ALTMD</name>
<comment type="function">
    <text evidence="1">Catalyzes the formation of 4-diphosphocytidyl-2-C-methyl-D-erythritol from CTP and 2-C-methyl-D-erythritol 4-phosphate (MEP).</text>
</comment>
<comment type="catalytic activity">
    <reaction evidence="1">
        <text>2-C-methyl-D-erythritol 4-phosphate + CTP + H(+) = 4-CDP-2-C-methyl-D-erythritol + diphosphate</text>
        <dbReference type="Rhea" id="RHEA:13429"/>
        <dbReference type="ChEBI" id="CHEBI:15378"/>
        <dbReference type="ChEBI" id="CHEBI:33019"/>
        <dbReference type="ChEBI" id="CHEBI:37563"/>
        <dbReference type="ChEBI" id="CHEBI:57823"/>
        <dbReference type="ChEBI" id="CHEBI:58262"/>
        <dbReference type="EC" id="2.7.7.60"/>
    </reaction>
</comment>
<comment type="pathway">
    <text evidence="1">Isoprenoid biosynthesis; isopentenyl diphosphate biosynthesis via DXP pathway; isopentenyl diphosphate from 1-deoxy-D-xylulose 5-phosphate: step 2/6.</text>
</comment>
<comment type="similarity">
    <text evidence="1">Belongs to the IspD/TarI cytidylyltransferase family. IspD subfamily.</text>
</comment>
<feature type="chain" id="PRO_1000117436" description="2-C-methyl-D-erythritol 4-phosphate cytidylyltransferase">
    <location>
        <begin position="1"/>
        <end position="238"/>
    </location>
</feature>
<feature type="site" description="Transition state stabilizer" evidence="1">
    <location>
        <position position="18"/>
    </location>
</feature>
<feature type="site" description="Transition state stabilizer" evidence="1">
    <location>
        <position position="25"/>
    </location>
</feature>
<feature type="site" description="Positions MEP for the nucleophilic attack" evidence="1">
    <location>
        <position position="155"/>
    </location>
</feature>
<feature type="site" description="Positions MEP for the nucleophilic attack" evidence="1">
    <location>
        <position position="211"/>
    </location>
</feature>
<gene>
    <name evidence="1" type="primary">ispD1</name>
    <name type="ordered locus">MADE_1003385</name>
</gene>
<gene>
    <name evidence="1" type="primary">ispD2</name>
    <name type="ordered locus">MADE_1018665</name>
</gene>
<keyword id="KW-0414">Isoprene biosynthesis</keyword>
<keyword id="KW-0548">Nucleotidyltransferase</keyword>
<keyword id="KW-0808">Transferase</keyword>
<reference key="1">
    <citation type="journal article" date="2008" name="ISME J.">
        <title>Comparative genomics of two ecotypes of the marine planktonic copiotroph Alteromonas macleodii suggests alternative lifestyles associated with different kinds of particulate organic matter.</title>
        <authorList>
            <person name="Ivars-Martinez E."/>
            <person name="Martin-Cuadrado A.-B."/>
            <person name="D'Auria G."/>
            <person name="Mira A."/>
            <person name="Ferriera S."/>
            <person name="Johnson J."/>
            <person name="Friedman R."/>
            <person name="Rodriguez-Valera F."/>
        </authorList>
    </citation>
    <scope>NUCLEOTIDE SEQUENCE [LARGE SCALE GENOMIC DNA]</scope>
    <source>
        <strain>DSM 17117 / CIP 110805 / LMG 28347 / Deep ecotype</strain>
    </source>
</reference>
<organism>
    <name type="scientific">Alteromonas mediterranea (strain DSM 17117 / CIP 110805 / LMG 28347 / Deep ecotype)</name>
    <dbReference type="NCBI Taxonomy" id="1774373"/>
    <lineage>
        <taxon>Bacteria</taxon>
        <taxon>Pseudomonadati</taxon>
        <taxon>Pseudomonadota</taxon>
        <taxon>Gammaproteobacteria</taxon>
        <taxon>Alteromonadales</taxon>
        <taxon>Alteromonadaceae</taxon>
        <taxon>Alteromonas/Salinimonas group</taxon>
        <taxon>Alteromonas</taxon>
    </lineage>
</organism>
<sequence>MTSPRVVAVIPAAGVGSRMQADRPKQYLSLNGKTILEHTIDALLNHPLIDDVIVAISQGDEYFDQLGLRQKPIRVVDGGKERADSVLNGILSLDENDWALVHDAARPCVDDADISNLLSLIGSEDVTGGILATPVRDTMKRVKPSSNIISHTEDRNGLWHALTPQLFPAMLLKRALQEGLAQGVSITDEASAMEFAGHSVAMVSGSPANIKITHPADLPLAEFYLKQKFSAQGDSAKN</sequence>
<accession>B4RZG5</accession>
<accession>F2G8C4</accession>